<organism>
    <name type="scientific">Arabidopsis thaliana</name>
    <name type="common">Mouse-ear cress</name>
    <dbReference type="NCBI Taxonomy" id="3702"/>
    <lineage>
        <taxon>Eukaryota</taxon>
        <taxon>Viridiplantae</taxon>
        <taxon>Streptophyta</taxon>
        <taxon>Embryophyta</taxon>
        <taxon>Tracheophyta</taxon>
        <taxon>Spermatophyta</taxon>
        <taxon>Magnoliopsida</taxon>
        <taxon>eudicotyledons</taxon>
        <taxon>Gunneridae</taxon>
        <taxon>Pentapetalae</taxon>
        <taxon>rosids</taxon>
        <taxon>malvids</taxon>
        <taxon>Brassicales</taxon>
        <taxon>Brassicaceae</taxon>
        <taxon>Camelineae</taxon>
        <taxon>Arabidopsis</taxon>
    </lineage>
</organism>
<keyword id="KW-0067">ATP-binding</keyword>
<keyword id="KW-1003">Cell membrane</keyword>
<keyword id="KW-0963">Cytoplasm</keyword>
<keyword id="KW-0418">Kinase</keyword>
<keyword id="KW-0472">Membrane</keyword>
<keyword id="KW-0547">Nucleotide-binding</keyword>
<keyword id="KW-0597">Phosphoprotein</keyword>
<keyword id="KW-0611">Plant defense</keyword>
<keyword id="KW-1185">Reference proteome</keyword>
<keyword id="KW-0808">Transferase</keyword>
<protein>
    <recommendedName>
        <fullName evidence="6">Mitogen-activated protein kinase kinase kinase 5</fullName>
        <ecNumber evidence="4">2.7.11.25</ecNumber>
    </recommendedName>
    <alternativeName>
        <fullName evidence="5">MAP3K gamma protein kinase</fullName>
        <shortName evidence="5">AtMAP3Kgamma</shortName>
    </alternativeName>
</protein>
<gene>
    <name evidence="6" type="primary">MAPKKK5</name>
    <name evidence="5" type="synonym">MAP3KG</name>
    <name evidence="8" type="ordered locus">At5g66850</name>
    <name evidence="9" type="ORF">MUD21.11</name>
</gene>
<accession>Q9C5H5</accession>
<accession>O23721</accession>
<accession>Q0WLS6</accession>
<accession>Q93ZH4</accession>
<accession>Q9FKZ5</accession>
<feature type="chain" id="PRO_0000438543" description="Mitogen-activated protein kinase kinase kinase 5">
    <location>
        <begin position="1"/>
        <end position="716"/>
    </location>
</feature>
<feature type="domain" description="Protein kinase" evidence="1">
    <location>
        <begin position="346"/>
        <end position="607"/>
    </location>
</feature>
<feature type="region of interest" description="Disordered" evidence="2">
    <location>
        <begin position="1"/>
        <end position="42"/>
    </location>
</feature>
<feature type="region of interest" description="Disordered" evidence="2">
    <location>
        <begin position="74"/>
        <end position="98"/>
    </location>
</feature>
<feature type="region of interest" description="Disordered" evidence="2">
    <location>
        <begin position="119"/>
        <end position="180"/>
    </location>
</feature>
<feature type="region of interest" description="Disordered" evidence="2">
    <location>
        <begin position="238"/>
        <end position="302"/>
    </location>
</feature>
<feature type="region of interest" description="Disordered" evidence="2">
    <location>
        <begin position="610"/>
        <end position="716"/>
    </location>
</feature>
<feature type="compositionally biased region" description="Low complexity" evidence="2">
    <location>
        <begin position="1"/>
        <end position="27"/>
    </location>
</feature>
<feature type="compositionally biased region" description="Basic and acidic residues" evidence="2">
    <location>
        <begin position="31"/>
        <end position="40"/>
    </location>
</feature>
<feature type="compositionally biased region" description="Polar residues" evidence="2">
    <location>
        <begin position="75"/>
        <end position="91"/>
    </location>
</feature>
<feature type="compositionally biased region" description="Basic and acidic residues" evidence="2">
    <location>
        <begin position="124"/>
        <end position="137"/>
    </location>
</feature>
<feature type="compositionally biased region" description="Polar residues" evidence="2">
    <location>
        <begin position="138"/>
        <end position="150"/>
    </location>
</feature>
<feature type="compositionally biased region" description="Polar residues" evidence="2">
    <location>
        <begin position="162"/>
        <end position="173"/>
    </location>
</feature>
<feature type="compositionally biased region" description="Polar residues" evidence="2">
    <location>
        <begin position="242"/>
        <end position="251"/>
    </location>
</feature>
<feature type="compositionally biased region" description="Low complexity" evidence="2">
    <location>
        <begin position="263"/>
        <end position="273"/>
    </location>
</feature>
<feature type="compositionally biased region" description="Polar residues" evidence="2">
    <location>
        <begin position="610"/>
        <end position="633"/>
    </location>
</feature>
<feature type="compositionally biased region" description="Basic and acidic residues" evidence="2">
    <location>
        <begin position="634"/>
        <end position="648"/>
    </location>
</feature>
<feature type="compositionally biased region" description="Polar residues" evidence="2">
    <location>
        <begin position="652"/>
        <end position="661"/>
    </location>
</feature>
<feature type="compositionally biased region" description="Polar residues" evidence="2">
    <location>
        <begin position="674"/>
        <end position="685"/>
    </location>
</feature>
<feature type="compositionally biased region" description="Basic and acidic residues" evidence="2">
    <location>
        <begin position="703"/>
        <end position="716"/>
    </location>
</feature>
<feature type="active site" description="Proton acceptor" evidence="1">
    <location>
        <position position="472"/>
    </location>
</feature>
<feature type="binding site" evidence="1">
    <location>
        <begin position="352"/>
        <end position="360"/>
    </location>
    <ligand>
        <name>ATP</name>
        <dbReference type="ChEBI" id="CHEBI:30616"/>
    </ligand>
</feature>
<feature type="binding site" evidence="1">
    <location>
        <position position="375"/>
    </location>
    <ligand>
        <name>ATP</name>
        <dbReference type="ChEBI" id="CHEBI:30616"/>
    </ligand>
</feature>
<feature type="modified residue" description="Phosphoserine; by PBL27" evidence="4">
    <location>
        <position position="617"/>
    </location>
</feature>
<feature type="modified residue" description="Phosphoserine; by PBL27" evidence="4">
    <location>
        <position position="622"/>
    </location>
</feature>
<feature type="modified residue" description="Phosphoserine; by PBL27" evidence="4">
    <location>
        <position position="658"/>
    </location>
</feature>
<feature type="modified residue" description="Phosphoserine; by PBL27" evidence="4">
    <location>
        <position position="660"/>
    </location>
</feature>
<feature type="modified residue" description="Phosphothreonine; by PBL27" evidence="4">
    <location>
        <position position="677"/>
    </location>
</feature>
<feature type="modified residue" description="Phosphoserine; by PBL27" evidence="4">
    <location>
        <position position="685"/>
    </location>
</feature>
<feature type="mutagenesis site" description="Inactive. Interacts with PBL27." evidence="4">
    <original>K</original>
    <variation>M</variation>
    <location>
        <position position="375"/>
    </location>
</feature>
<feature type="mutagenesis site" description="Slight reduction of PBL27-mediated phosphorylation. Impaired PBL27-mediated phosphorylation but normal interaction with PBL27, and loss of chitin-induced MAPK activation and callose deposition; when associated with A-622; A-658; A-660; A-677 and A-685." evidence="4">
    <original>S</original>
    <variation>A</variation>
    <location>
        <position position="617"/>
    </location>
</feature>
<feature type="mutagenesis site" description="Strong reduction of PBL27-mediated phosphorylation. Impaired PBL27-mediated phosphorylation but normal interaction with PBL27, and loss of chitin-induced MAPK activation and callose deposition; when associated with A-617; A-658; A-660; A-677 and A-685." evidence="4">
    <original>S</original>
    <variation>A</variation>
    <location>
        <position position="622"/>
    </location>
</feature>
<feature type="mutagenesis site" description="Slight reduction of PBL27-mediated phosphorylation. Impaired PBL27-mediated phosphorylation but normal interaction with PBL27, and loss of chitin-induced MAPK activation and callose deposition; when associated with A-617; A-622; A-660; A-677 and A-685." evidence="4">
    <original>S</original>
    <variation>A</variation>
    <location>
        <position position="658"/>
    </location>
</feature>
<feature type="mutagenesis site" description="Slight reduction of PBL27-mediated phosphorylation. Impaired PBL27-mediated phosphorylation but normal interaction with PBL27, and loss of chitin-induced MAPK activation and callose deposition; when associated with A-617; A-622; A-658; A-677 and A-685." evidence="4">
    <original>S</original>
    <variation>A</variation>
    <location>
        <position position="660"/>
    </location>
</feature>
<feature type="mutagenesis site" description="Impaired PBL27-mediated phosphorylation but normal interaction with PBL27, and loss of chitin-induced MAPK activation and callose deposition; when associated with A-617; A-622; A-658; A-660 and A-685." evidence="4">
    <original>T</original>
    <variation>A</variation>
    <location>
        <position position="677"/>
    </location>
</feature>
<feature type="mutagenesis site" description="Slight reduction of PBL27-mediated phosphorylation. Impaired PBL27-mediated phosphorylation but normal interaction with PBL27, and loss of chitin-induced MAPK activation and callose deposition; when associated with A-617; A-622; A-658; A-660 and A-677." evidence="4">
    <original>S</original>
    <variation>A</variation>
    <location>
        <position position="685"/>
    </location>
</feature>
<feature type="sequence conflict" description="In Ref. 3; AAL09773." evidence="7" ref="3">
    <original>K</original>
    <variation>E</variation>
    <location>
        <position position="347"/>
    </location>
</feature>
<comment type="function">
    <text evidence="4">Mitogen-activated protein kinase (MAPK) involved in the transduction of signal between the host cell surface chitin receptor complex CERK1-LYK5 and the intracellular MAPK cascade that leads to chitin-induced immunity. Phosphorylates and activates MAPK targets (e.g. MKK4, MKK5, and possibly MKK2) when phosphorylated by PBL27 after elicitation by chitin. Required for resistance to the fungus A.brassicicola.</text>
</comment>
<comment type="catalytic activity">
    <reaction evidence="4">
        <text>L-seryl-[protein] + ATP = O-phospho-L-seryl-[protein] + ADP + H(+)</text>
        <dbReference type="Rhea" id="RHEA:17989"/>
        <dbReference type="Rhea" id="RHEA-COMP:9863"/>
        <dbReference type="Rhea" id="RHEA-COMP:11604"/>
        <dbReference type="ChEBI" id="CHEBI:15378"/>
        <dbReference type="ChEBI" id="CHEBI:29999"/>
        <dbReference type="ChEBI" id="CHEBI:30616"/>
        <dbReference type="ChEBI" id="CHEBI:83421"/>
        <dbReference type="ChEBI" id="CHEBI:456216"/>
        <dbReference type="EC" id="2.7.11.25"/>
    </reaction>
</comment>
<comment type="catalytic activity">
    <reaction evidence="4">
        <text>L-threonyl-[protein] + ATP = O-phospho-L-threonyl-[protein] + ADP + H(+)</text>
        <dbReference type="Rhea" id="RHEA:46608"/>
        <dbReference type="Rhea" id="RHEA-COMP:11060"/>
        <dbReference type="Rhea" id="RHEA-COMP:11605"/>
        <dbReference type="ChEBI" id="CHEBI:15378"/>
        <dbReference type="ChEBI" id="CHEBI:30013"/>
        <dbReference type="ChEBI" id="CHEBI:30616"/>
        <dbReference type="ChEBI" id="CHEBI:61977"/>
        <dbReference type="ChEBI" id="CHEBI:456216"/>
        <dbReference type="EC" id="2.7.11.25"/>
    </reaction>
</comment>
<comment type="subunit">
    <text evidence="4">Interacts with PBL27 at the plasma membrane; disassociation is induced by chitin perception by the CERK1 complex. Interacts with MKK2, MKK4, and MKK5 mainly in the cytosol.</text>
</comment>
<comment type="subcellular location">
    <subcellularLocation>
        <location evidence="4">Cell membrane</location>
    </subcellularLocation>
    <subcellularLocation>
        <location evidence="4">Cytoplasm</location>
        <location evidence="4">Cytosol</location>
    </subcellularLocation>
</comment>
<comment type="tissue specificity">
    <text evidence="3">Mostly expressed in flower buds. Also present in pollen, roots, leaves and seedlings, and, at low levels, in stems and immature siliques.</text>
</comment>
<comment type="induction">
    <text evidence="4">Induced by chitin. Levels are regulated in a proteasome-dependent manner (at proteome level).</text>
</comment>
<comment type="PTM">
    <text evidence="4">Phosphorylated by PBL27 during chitin-mediated signaling in a CERK1-dependent manner.</text>
</comment>
<comment type="disruption phenotype">
    <text evidence="4">Normal morphology in standard conditions. Impaired chitin-induced MAPK activation (e.g. MPK3, MPK4, and MPK6) and altered subsequent disease resistance to A.brassicicola associated with reduced levels of chitin-induced callose deposition.</text>
</comment>
<comment type="similarity">
    <text evidence="7">Belongs to the protein kinase superfamily. STE Ser/Thr protein kinase family. MAP kinase kinase kinase subfamily.</text>
</comment>
<comment type="sequence caution" evidence="7">
    <conflict type="erroneous gene model prediction">
        <sequence resource="EMBL-CDS" id="BAB08627"/>
    </conflict>
</comment>
<reference key="1">
    <citation type="journal article" date="1998" name="DNA Res.">
        <title>Structural analysis of Arabidopsis thaliana chromosome 5. V. Sequence features of the regions of 1,381,565 bp covered by twenty one physically assigned P1 and TAC clones.</title>
        <authorList>
            <person name="Kaneko T."/>
            <person name="Kotani H."/>
            <person name="Nakamura Y."/>
            <person name="Sato S."/>
            <person name="Asamizu E."/>
            <person name="Miyajima N."/>
            <person name="Tabata S."/>
        </authorList>
    </citation>
    <scope>NUCLEOTIDE SEQUENCE [LARGE SCALE GENOMIC DNA]</scope>
    <source>
        <strain>cv. Columbia</strain>
    </source>
</reference>
<reference key="2">
    <citation type="journal article" date="2017" name="Plant J.">
        <title>Araport11: a complete reannotation of the Arabidopsis thaliana reference genome.</title>
        <authorList>
            <person name="Cheng C.Y."/>
            <person name="Krishnakumar V."/>
            <person name="Chan A.P."/>
            <person name="Thibaud-Nissen F."/>
            <person name="Schobel S."/>
            <person name="Town C.D."/>
        </authorList>
    </citation>
    <scope>GENOME REANNOTATION</scope>
    <source>
        <strain>cv. Columbia</strain>
    </source>
</reference>
<reference key="3">
    <citation type="journal article" date="2003" name="Science">
        <title>Empirical analysis of transcriptional activity in the Arabidopsis genome.</title>
        <authorList>
            <person name="Yamada K."/>
            <person name="Lim J."/>
            <person name="Dale J.M."/>
            <person name="Chen H."/>
            <person name="Shinn P."/>
            <person name="Palm C.J."/>
            <person name="Southwick A.M."/>
            <person name="Wu H.C."/>
            <person name="Kim C.J."/>
            <person name="Nguyen M."/>
            <person name="Pham P.K."/>
            <person name="Cheuk R.F."/>
            <person name="Karlin-Newmann G."/>
            <person name="Liu S.X."/>
            <person name="Lam B."/>
            <person name="Sakano H."/>
            <person name="Wu T."/>
            <person name="Yu G."/>
            <person name="Miranda M."/>
            <person name="Quach H.L."/>
            <person name="Tripp M."/>
            <person name="Chang C.H."/>
            <person name="Lee J.M."/>
            <person name="Toriumi M.J."/>
            <person name="Chan M.M."/>
            <person name="Tang C.C."/>
            <person name="Onodera C.S."/>
            <person name="Deng J.M."/>
            <person name="Akiyama K."/>
            <person name="Ansari Y."/>
            <person name="Arakawa T."/>
            <person name="Banh J."/>
            <person name="Banno F."/>
            <person name="Bowser L."/>
            <person name="Brooks S.Y."/>
            <person name="Carninci P."/>
            <person name="Chao Q."/>
            <person name="Choy N."/>
            <person name="Enju A."/>
            <person name="Goldsmith A.D."/>
            <person name="Gurjal M."/>
            <person name="Hansen N.F."/>
            <person name="Hayashizaki Y."/>
            <person name="Johnson-Hopson C."/>
            <person name="Hsuan V.W."/>
            <person name="Iida K."/>
            <person name="Karnes M."/>
            <person name="Khan S."/>
            <person name="Koesema E."/>
            <person name="Ishida J."/>
            <person name="Jiang P.X."/>
            <person name="Jones T."/>
            <person name="Kawai J."/>
            <person name="Kamiya A."/>
            <person name="Meyers C."/>
            <person name="Nakajima M."/>
            <person name="Narusaka M."/>
            <person name="Seki M."/>
            <person name="Sakurai T."/>
            <person name="Satou M."/>
            <person name="Tamse R."/>
            <person name="Vaysberg M."/>
            <person name="Wallender E.K."/>
            <person name="Wong C."/>
            <person name="Yamamura Y."/>
            <person name="Yuan S."/>
            <person name="Shinozaki K."/>
            <person name="Davis R.W."/>
            <person name="Theologis A."/>
            <person name="Ecker J.R."/>
        </authorList>
    </citation>
    <scope>NUCLEOTIDE SEQUENCE [LARGE SCALE MRNA]</scope>
    <source>
        <strain>cv. Columbia</strain>
    </source>
</reference>
<reference key="4">
    <citation type="journal article" date="1999" name="Gene">
        <title>Characterisation of novel plant genes encoding MEKK/STE11 and RAF-related protein kinases.</title>
        <authorList>
            <person name="Jouannic S."/>
            <person name="Hamal A."/>
            <person name="Leprince A.-S."/>
            <person name="Tregear J.W."/>
            <person name="Kreis M."/>
            <person name="Henry Y."/>
        </authorList>
    </citation>
    <scope>NUCLEOTIDE SEQUENCE [MRNA] OF 345-716</scope>
    <scope>TISSUE SPECIFICITY</scope>
    <source>
        <strain>cv. Columbia</strain>
        <tissue>Pollen</tissue>
    </source>
</reference>
<reference key="5">
    <citation type="submission" date="2006-07" db="EMBL/GenBank/DDBJ databases">
        <title>Large-scale analysis of RIKEN Arabidopsis full-length (RAFL) cDNAs.</title>
        <authorList>
            <person name="Totoki Y."/>
            <person name="Seki M."/>
            <person name="Ishida J."/>
            <person name="Nakajima M."/>
            <person name="Enju A."/>
            <person name="Kamiya A."/>
            <person name="Narusaka M."/>
            <person name="Shin-i T."/>
            <person name="Nakagawa M."/>
            <person name="Sakamoto N."/>
            <person name="Oishi K."/>
            <person name="Kohara Y."/>
            <person name="Kobayashi M."/>
            <person name="Toyoda A."/>
            <person name="Sakaki Y."/>
            <person name="Sakurai T."/>
            <person name="Iida K."/>
            <person name="Akiyama K."/>
            <person name="Satou M."/>
            <person name="Toyoda T."/>
            <person name="Konagaya A."/>
            <person name="Carninci P."/>
            <person name="Kawai J."/>
            <person name="Hayashizaki Y."/>
            <person name="Shinozaki K."/>
        </authorList>
    </citation>
    <scope>NUCLEOTIDE SEQUENCE [LARGE SCALE MRNA] OF 521-716</scope>
    <source>
        <strain>cv. Columbia</strain>
    </source>
</reference>
<reference key="6">
    <citation type="journal article" date="1999" name="Gene">
        <title>Plant MAP kinase kinase kinases structure, classification and evolution.</title>
        <authorList>
            <person name="Jouannic C."/>
            <person name="Hamal A."/>
            <person name="Leprince A.-S."/>
            <person name="Tregear J."/>
            <person name="Kreis M."/>
            <person name="Henry Y."/>
        </authorList>
    </citation>
    <scope>GENE FAMILY</scope>
    <source>
        <strain>cv. Columbia</strain>
    </source>
</reference>
<reference key="7">
    <citation type="journal article" date="2002" name="Trends Plant Sci.">
        <title>Mitogen-activated protein kinase cascades in plants: a new nomenclature.</title>
        <authorList>
            <consortium name="MAPK group"/>
        </authorList>
    </citation>
    <scope>GENE FAMILY</scope>
</reference>
<reference key="8">
    <citation type="journal article" date="2016" name="EMBO J.">
        <title>The Arabidopsis CERK1-associated kinase PBL27 connects chitin perception to MAPK activation.</title>
        <authorList>
            <person name="Yamada K."/>
            <person name="Yamaguchi K."/>
            <person name="Shirakawa T."/>
            <person name="Nakagami H."/>
            <person name="Mine A."/>
            <person name="Ishikawa K."/>
            <person name="Fujiwara M."/>
            <person name="Narusaka M."/>
            <person name="Narusaka Y."/>
            <person name="Ichimura K."/>
            <person name="Kobayashi Y."/>
            <person name="Matsui H."/>
            <person name="Nomura Y."/>
            <person name="Nomoto M."/>
            <person name="Tada Y."/>
            <person name="Fukao Y."/>
            <person name="Fukamizo T."/>
            <person name="Tsuda K."/>
            <person name="Shirasu K."/>
            <person name="Shibuya N."/>
            <person name="Kawasaki T."/>
        </authorList>
    </citation>
    <scope>FUNCTION</scope>
    <scope>DISRUPTION PHENOTYPE</scope>
    <scope>MUTAGENESIS OF LYS-375; SER-617; SER-622; SER-658; SER-660; THR-677 AND SER-685</scope>
    <scope>INTERACTION WITH PBL27; MKK2; MKK4 AND MKK5</scope>
    <scope>SUBCELLULAR LOCATION</scope>
    <scope>INDUCTION BY CHITIN</scope>
    <scope>PHOSPHORYLATION AT SER-617; SER-622; SER-658; SER-660; THR-677 AND SER-685 BY PBL27</scope>
    <scope>CATALYTIC ACTIVITY</scope>
    <source>
        <strain>cv. Columbia</strain>
    </source>
</reference>
<dbReference type="EC" id="2.7.11.25" evidence="4"/>
<dbReference type="EMBL" id="AB010700">
    <property type="protein sequence ID" value="BAB08627.1"/>
    <property type="status" value="ALT_SEQ"/>
    <property type="molecule type" value="Genomic_DNA"/>
</dbReference>
<dbReference type="EMBL" id="CP002688">
    <property type="protein sequence ID" value="AED98271.1"/>
    <property type="molecule type" value="Genomic_DNA"/>
</dbReference>
<dbReference type="EMBL" id="AF360242">
    <property type="protein sequence ID" value="AAK25952.1"/>
    <property type="molecule type" value="mRNA"/>
</dbReference>
<dbReference type="EMBL" id="AY040040">
    <property type="protein sequence ID" value="AAK64098.1"/>
    <property type="molecule type" value="mRNA"/>
</dbReference>
<dbReference type="EMBL" id="AY057533">
    <property type="protein sequence ID" value="AAL09773.1"/>
    <property type="molecule type" value="mRNA"/>
</dbReference>
<dbReference type="EMBL" id="Y14316">
    <property type="protein sequence ID" value="CAA74696.1"/>
    <property type="molecule type" value="mRNA"/>
</dbReference>
<dbReference type="EMBL" id="AK230114">
    <property type="protein sequence ID" value="BAF01931.1"/>
    <property type="molecule type" value="mRNA"/>
</dbReference>
<dbReference type="PIR" id="T52621">
    <property type="entry name" value="T52621"/>
</dbReference>
<dbReference type="RefSeq" id="NP_569040.1">
    <property type="nucleotide sequence ID" value="NM_126084.3"/>
</dbReference>
<dbReference type="SMR" id="Q9C5H5"/>
<dbReference type="FunCoup" id="Q9C5H5">
    <property type="interactions" value="2211"/>
</dbReference>
<dbReference type="IntAct" id="Q9C5H5">
    <property type="interactions" value="1"/>
</dbReference>
<dbReference type="STRING" id="3702.Q9C5H5"/>
<dbReference type="iPTMnet" id="Q9C5H5"/>
<dbReference type="PaxDb" id="3702-AT5G66850.1"/>
<dbReference type="ProteomicsDB" id="238811"/>
<dbReference type="EnsemblPlants" id="AT5G66850.1">
    <property type="protein sequence ID" value="AT5G66850.1"/>
    <property type="gene ID" value="AT5G66850"/>
</dbReference>
<dbReference type="GeneID" id="836819"/>
<dbReference type="Gramene" id="AT5G66850.1">
    <property type="protein sequence ID" value="AT5G66850.1"/>
    <property type="gene ID" value="AT5G66850"/>
</dbReference>
<dbReference type="KEGG" id="ath:AT5G66850"/>
<dbReference type="Araport" id="AT5G66850"/>
<dbReference type="TAIR" id="AT5G66850">
    <property type="gene designation" value="MAPKKK5"/>
</dbReference>
<dbReference type="eggNOG" id="KOG0198">
    <property type="taxonomic scope" value="Eukaryota"/>
</dbReference>
<dbReference type="HOGENOM" id="CLU_000288_124_2_1"/>
<dbReference type="InParanoid" id="Q9C5H5"/>
<dbReference type="OrthoDB" id="266718at2759"/>
<dbReference type="PhylomeDB" id="Q9C5H5"/>
<dbReference type="PRO" id="PR:Q9C5H5"/>
<dbReference type="Proteomes" id="UP000006548">
    <property type="component" value="Chromosome 5"/>
</dbReference>
<dbReference type="ExpressionAtlas" id="Q9C5H5">
    <property type="expression patterns" value="baseline and differential"/>
</dbReference>
<dbReference type="GO" id="GO:0005829">
    <property type="term" value="C:cytosol"/>
    <property type="evidence" value="ECO:0000314"/>
    <property type="project" value="UniProtKB"/>
</dbReference>
<dbReference type="GO" id="GO:0005886">
    <property type="term" value="C:plasma membrane"/>
    <property type="evidence" value="ECO:0000314"/>
    <property type="project" value="UniProtKB"/>
</dbReference>
<dbReference type="GO" id="GO:0005524">
    <property type="term" value="F:ATP binding"/>
    <property type="evidence" value="ECO:0007669"/>
    <property type="project" value="UniProtKB-KW"/>
</dbReference>
<dbReference type="GO" id="GO:0004709">
    <property type="term" value="F:MAP kinase kinase kinase activity"/>
    <property type="evidence" value="ECO:0007669"/>
    <property type="project" value="UniProtKB-EC"/>
</dbReference>
<dbReference type="GO" id="GO:0106310">
    <property type="term" value="F:protein serine kinase activity"/>
    <property type="evidence" value="ECO:0007669"/>
    <property type="project" value="RHEA"/>
</dbReference>
<dbReference type="GO" id="GO:0004674">
    <property type="term" value="F:protein serine/threonine kinase activity"/>
    <property type="evidence" value="ECO:0007005"/>
    <property type="project" value="TAIR"/>
</dbReference>
<dbReference type="GO" id="GO:0050832">
    <property type="term" value="P:defense response to fungus"/>
    <property type="evidence" value="ECO:0000315"/>
    <property type="project" value="GO_Central"/>
</dbReference>
<dbReference type="GO" id="GO:0000165">
    <property type="term" value="P:MAPK cascade"/>
    <property type="evidence" value="ECO:0000315"/>
    <property type="project" value="GO_Central"/>
</dbReference>
<dbReference type="GO" id="GO:0002221">
    <property type="term" value="P:pattern recognition receptor signaling pathway"/>
    <property type="evidence" value="ECO:0000316"/>
    <property type="project" value="TAIR"/>
</dbReference>
<dbReference type="GO" id="GO:0046777">
    <property type="term" value="P:protein autophosphorylation"/>
    <property type="evidence" value="ECO:0007005"/>
    <property type="project" value="TAIR"/>
</dbReference>
<dbReference type="GO" id="GO:2000071">
    <property type="term" value="P:regulation of defense response by callose deposition"/>
    <property type="evidence" value="ECO:0000315"/>
    <property type="project" value="UniProtKB"/>
</dbReference>
<dbReference type="GO" id="GO:1900424">
    <property type="term" value="P:regulation of defense response to bacterium"/>
    <property type="evidence" value="ECO:0000316"/>
    <property type="project" value="TAIR"/>
</dbReference>
<dbReference type="GO" id="GO:1900150">
    <property type="term" value="P:regulation of defense response to fungus"/>
    <property type="evidence" value="ECO:0000316"/>
    <property type="project" value="TAIR"/>
</dbReference>
<dbReference type="GO" id="GO:0045088">
    <property type="term" value="P:regulation of innate immune response"/>
    <property type="evidence" value="ECO:0000315"/>
    <property type="project" value="UniProtKB"/>
</dbReference>
<dbReference type="FunFam" id="1.10.510.10:FF:000357">
    <property type="entry name" value="Mitogen-activated protein kinase kinase kinase 5"/>
    <property type="match status" value="1"/>
</dbReference>
<dbReference type="Gene3D" id="1.10.510.10">
    <property type="entry name" value="Transferase(Phosphotransferase) domain 1"/>
    <property type="match status" value="1"/>
</dbReference>
<dbReference type="InterPro" id="IPR011009">
    <property type="entry name" value="Kinase-like_dom_sf"/>
</dbReference>
<dbReference type="InterPro" id="IPR050538">
    <property type="entry name" value="MAP_kinase_kinase_kinase"/>
</dbReference>
<dbReference type="InterPro" id="IPR000719">
    <property type="entry name" value="Prot_kinase_dom"/>
</dbReference>
<dbReference type="InterPro" id="IPR017441">
    <property type="entry name" value="Protein_kinase_ATP_BS"/>
</dbReference>
<dbReference type="PANTHER" id="PTHR48016">
    <property type="entry name" value="MAP KINASE KINASE KINASE SSK2-RELATED-RELATED"/>
    <property type="match status" value="1"/>
</dbReference>
<dbReference type="PANTHER" id="PTHR48016:SF5">
    <property type="entry name" value="MITOGEN-ACTIVATED PROTEIN KINASE KINASE KINASE 5"/>
    <property type="match status" value="1"/>
</dbReference>
<dbReference type="Pfam" id="PF00069">
    <property type="entry name" value="Pkinase"/>
    <property type="match status" value="1"/>
</dbReference>
<dbReference type="SMART" id="SM00220">
    <property type="entry name" value="S_TKc"/>
    <property type="match status" value="1"/>
</dbReference>
<dbReference type="SUPFAM" id="SSF56112">
    <property type="entry name" value="Protein kinase-like (PK-like)"/>
    <property type="match status" value="1"/>
</dbReference>
<dbReference type="PROSITE" id="PS00107">
    <property type="entry name" value="PROTEIN_KINASE_ATP"/>
    <property type="match status" value="1"/>
</dbReference>
<dbReference type="PROSITE" id="PS50011">
    <property type="entry name" value="PROTEIN_KINASE_DOM"/>
    <property type="match status" value="1"/>
</dbReference>
<proteinExistence type="evidence at protein level"/>
<sequence>MRWLPQISFSSPSSSPSSSLKPVASYSESPDPDRNQDRDRFHRRLFRFNRGRLTRQRKLRHLTDDDVLLGERRASTSSSTFDSGLTRSPSAFTAVPRSPSAVPLPLPLPLPEVAGIRNAANARGLDDRDRDPERLISDRTSSGPPLTSVNGGFARDSRKATENSSYQDFSPRNRNGYWVNIPTMSAPTSPYMSPVPSPQRKSTGHDLPFFYLPPKSNQAWSAPDMPLDTSGLPPPAFYDITAFSTDNSPIHSPQPRSPRKQIRSPQPSRPSSPLHSVDSSAPPRDSVSSPLHPRLSTDVTNGRRDCCNVHPLPLPPGATCSSSSAASVPSPQAPLKLDSFPMNSQWKKGKLIGRGTFGSVYVASNSETGALCAMKEVELFPDDPKSAECIKQLEQEIKLLSNLQHPNIVQYFGSETVEDRFFIYLEYVHPGSINKYIRDHCGTMTESVVRNFTRHILSGLAYLHNKKTVHRDIKGANLLVDASGVVKLADFGMAKHLTGQRADLSLKGSPYWMAPELMQAVMQKDSNPDLAFAVDIWSLGCTIIEMFTGKPPWSEFEGAAAMFKVMRDSPPIPESMSPEGKDFLRLCFQRNPAERPTASMLLEHRFLKNSLQPTSPSNSDVSQLFNGMNITEPSSRREKPNFKLDQVPRARNMTSSESESGQQQQQQQYRSPDLTGTVNRLSPRSTLEAIPSPCPSQRPKPSSSDRRRTGVTSDHL</sequence>
<name>M3K5G_ARATH</name>
<evidence type="ECO:0000255" key="1">
    <source>
        <dbReference type="PROSITE-ProRule" id="PRU00159"/>
    </source>
</evidence>
<evidence type="ECO:0000256" key="2">
    <source>
        <dbReference type="SAM" id="MobiDB-lite"/>
    </source>
</evidence>
<evidence type="ECO:0000269" key="3">
    <source>
    </source>
</evidence>
<evidence type="ECO:0000269" key="4">
    <source>
    </source>
</evidence>
<evidence type="ECO:0000303" key="5">
    <source>
    </source>
</evidence>
<evidence type="ECO:0000303" key="6">
    <source>
    </source>
</evidence>
<evidence type="ECO:0000305" key="7"/>
<evidence type="ECO:0000312" key="8">
    <source>
        <dbReference type="Araport" id="AT5G66850"/>
    </source>
</evidence>
<evidence type="ECO:0000312" key="9">
    <source>
        <dbReference type="EMBL" id="BAB08627.1"/>
    </source>
</evidence>